<gene>
    <name evidence="1" type="primary">obg</name>
    <name type="ordered locus">Shewmr4_0897</name>
</gene>
<proteinExistence type="inferred from homology"/>
<organism>
    <name type="scientific">Shewanella sp. (strain MR-4)</name>
    <dbReference type="NCBI Taxonomy" id="60480"/>
    <lineage>
        <taxon>Bacteria</taxon>
        <taxon>Pseudomonadati</taxon>
        <taxon>Pseudomonadota</taxon>
        <taxon>Gammaproteobacteria</taxon>
        <taxon>Alteromonadales</taxon>
        <taxon>Shewanellaceae</taxon>
        <taxon>Shewanella</taxon>
    </lineage>
</organism>
<comment type="function">
    <text evidence="1">An essential GTPase which binds GTP, GDP and possibly (p)ppGpp with moderate affinity, with high nucleotide exchange rates and a fairly low GTP hydrolysis rate. Plays a role in control of the cell cycle, stress response, ribosome biogenesis and in those bacteria that undergo differentiation, in morphogenesis control.</text>
</comment>
<comment type="cofactor">
    <cofactor evidence="1">
        <name>Mg(2+)</name>
        <dbReference type="ChEBI" id="CHEBI:18420"/>
    </cofactor>
</comment>
<comment type="subunit">
    <text evidence="1">Monomer.</text>
</comment>
<comment type="subcellular location">
    <subcellularLocation>
        <location evidence="1">Cytoplasm</location>
    </subcellularLocation>
</comment>
<comment type="similarity">
    <text evidence="1">Belongs to the TRAFAC class OBG-HflX-like GTPase superfamily. OBG GTPase family.</text>
</comment>
<reference key="1">
    <citation type="submission" date="2006-08" db="EMBL/GenBank/DDBJ databases">
        <title>Complete sequence of Shewanella sp. MR-4.</title>
        <authorList>
            <consortium name="US DOE Joint Genome Institute"/>
            <person name="Copeland A."/>
            <person name="Lucas S."/>
            <person name="Lapidus A."/>
            <person name="Barry K."/>
            <person name="Detter J.C."/>
            <person name="Glavina del Rio T."/>
            <person name="Hammon N."/>
            <person name="Israni S."/>
            <person name="Dalin E."/>
            <person name="Tice H."/>
            <person name="Pitluck S."/>
            <person name="Kiss H."/>
            <person name="Brettin T."/>
            <person name="Bruce D."/>
            <person name="Han C."/>
            <person name="Tapia R."/>
            <person name="Gilna P."/>
            <person name="Schmutz J."/>
            <person name="Larimer F."/>
            <person name="Land M."/>
            <person name="Hauser L."/>
            <person name="Kyrpides N."/>
            <person name="Mikhailova N."/>
            <person name="Nealson K."/>
            <person name="Konstantinidis K."/>
            <person name="Klappenbach J."/>
            <person name="Tiedje J."/>
            <person name="Richardson P."/>
        </authorList>
    </citation>
    <scope>NUCLEOTIDE SEQUENCE [LARGE SCALE GENOMIC DNA]</scope>
    <source>
        <strain>MR-4</strain>
    </source>
</reference>
<evidence type="ECO:0000255" key="1">
    <source>
        <dbReference type="HAMAP-Rule" id="MF_01454"/>
    </source>
</evidence>
<evidence type="ECO:0000255" key="2">
    <source>
        <dbReference type="PROSITE-ProRule" id="PRU01231"/>
    </source>
</evidence>
<protein>
    <recommendedName>
        <fullName evidence="1">GTPase Obg</fullName>
        <ecNumber evidence="1">3.6.5.-</ecNumber>
    </recommendedName>
    <alternativeName>
        <fullName evidence="1">GTP-binding protein Obg</fullName>
    </alternativeName>
</protein>
<name>OBG_SHESM</name>
<dbReference type="EC" id="3.6.5.-" evidence="1"/>
<dbReference type="EMBL" id="CP000446">
    <property type="protein sequence ID" value="ABI37977.1"/>
    <property type="molecule type" value="Genomic_DNA"/>
</dbReference>
<dbReference type="SMR" id="Q0HLU0"/>
<dbReference type="KEGG" id="she:Shewmr4_0897"/>
<dbReference type="HOGENOM" id="CLU_011747_2_0_6"/>
<dbReference type="GO" id="GO:0005737">
    <property type="term" value="C:cytoplasm"/>
    <property type="evidence" value="ECO:0007669"/>
    <property type="project" value="UniProtKB-SubCell"/>
</dbReference>
<dbReference type="GO" id="GO:0005525">
    <property type="term" value="F:GTP binding"/>
    <property type="evidence" value="ECO:0007669"/>
    <property type="project" value="UniProtKB-UniRule"/>
</dbReference>
<dbReference type="GO" id="GO:0003924">
    <property type="term" value="F:GTPase activity"/>
    <property type="evidence" value="ECO:0007669"/>
    <property type="project" value="UniProtKB-UniRule"/>
</dbReference>
<dbReference type="GO" id="GO:0000287">
    <property type="term" value="F:magnesium ion binding"/>
    <property type="evidence" value="ECO:0007669"/>
    <property type="project" value="InterPro"/>
</dbReference>
<dbReference type="GO" id="GO:0042254">
    <property type="term" value="P:ribosome biogenesis"/>
    <property type="evidence" value="ECO:0007669"/>
    <property type="project" value="UniProtKB-UniRule"/>
</dbReference>
<dbReference type="CDD" id="cd01898">
    <property type="entry name" value="Obg"/>
    <property type="match status" value="1"/>
</dbReference>
<dbReference type="FunFam" id="2.70.210.12:FF:000001">
    <property type="entry name" value="GTPase Obg"/>
    <property type="match status" value="1"/>
</dbReference>
<dbReference type="Gene3D" id="2.70.210.12">
    <property type="entry name" value="GTP1/OBG domain"/>
    <property type="match status" value="1"/>
</dbReference>
<dbReference type="Gene3D" id="3.40.50.300">
    <property type="entry name" value="P-loop containing nucleotide triphosphate hydrolases"/>
    <property type="match status" value="1"/>
</dbReference>
<dbReference type="HAMAP" id="MF_01454">
    <property type="entry name" value="GTPase_Obg"/>
    <property type="match status" value="1"/>
</dbReference>
<dbReference type="InterPro" id="IPR031167">
    <property type="entry name" value="G_OBG"/>
</dbReference>
<dbReference type="InterPro" id="IPR006073">
    <property type="entry name" value="GTP-bd"/>
</dbReference>
<dbReference type="InterPro" id="IPR014100">
    <property type="entry name" value="GTP-bd_Obg/CgtA"/>
</dbReference>
<dbReference type="InterPro" id="IPR006074">
    <property type="entry name" value="GTP1-OBG_CS"/>
</dbReference>
<dbReference type="InterPro" id="IPR006169">
    <property type="entry name" value="GTP1_OBG_dom"/>
</dbReference>
<dbReference type="InterPro" id="IPR036726">
    <property type="entry name" value="GTP1_OBG_dom_sf"/>
</dbReference>
<dbReference type="InterPro" id="IPR045086">
    <property type="entry name" value="OBG_GTPase"/>
</dbReference>
<dbReference type="InterPro" id="IPR027417">
    <property type="entry name" value="P-loop_NTPase"/>
</dbReference>
<dbReference type="NCBIfam" id="TIGR02729">
    <property type="entry name" value="Obg_CgtA"/>
    <property type="match status" value="1"/>
</dbReference>
<dbReference type="NCBIfam" id="NF008955">
    <property type="entry name" value="PRK12297.1"/>
    <property type="match status" value="1"/>
</dbReference>
<dbReference type="NCBIfam" id="NF008956">
    <property type="entry name" value="PRK12299.1"/>
    <property type="match status" value="1"/>
</dbReference>
<dbReference type="PANTHER" id="PTHR11702">
    <property type="entry name" value="DEVELOPMENTALLY REGULATED GTP-BINDING PROTEIN-RELATED"/>
    <property type="match status" value="1"/>
</dbReference>
<dbReference type="PANTHER" id="PTHR11702:SF31">
    <property type="entry name" value="MITOCHONDRIAL RIBOSOME-ASSOCIATED GTPASE 2"/>
    <property type="match status" value="1"/>
</dbReference>
<dbReference type="Pfam" id="PF01018">
    <property type="entry name" value="GTP1_OBG"/>
    <property type="match status" value="1"/>
</dbReference>
<dbReference type="Pfam" id="PF01926">
    <property type="entry name" value="MMR_HSR1"/>
    <property type="match status" value="1"/>
</dbReference>
<dbReference type="PIRSF" id="PIRSF002401">
    <property type="entry name" value="GTP_bd_Obg/CgtA"/>
    <property type="match status" value="1"/>
</dbReference>
<dbReference type="PRINTS" id="PR00326">
    <property type="entry name" value="GTP1OBG"/>
</dbReference>
<dbReference type="SUPFAM" id="SSF82051">
    <property type="entry name" value="Obg GTP-binding protein N-terminal domain"/>
    <property type="match status" value="1"/>
</dbReference>
<dbReference type="SUPFAM" id="SSF52540">
    <property type="entry name" value="P-loop containing nucleoside triphosphate hydrolases"/>
    <property type="match status" value="1"/>
</dbReference>
<dbReference type="PROSITE" id="PS51710">
    <property type="entry name" value="G_OBG"/>
    <property type="match status" value="1"/>
</dbReference>
<dbReference type="PROSITE" id="PS00905">
    <property type="entry name" value="GTP1_OBG"/>
    <property type="match status" value="1"/>
</dbReference>
<dbReference type="PROSITE" id="PS51883">
    <property type="entry name" value="OBG"/>
    <property type="match status" value="1"/>
</dbReference>
<feature type="chain" id="PRO_0000386250" description="GTPase Obg">
    <location>
        <begin position="1"/>
        <end position="388"/>
    </location>
</feature>
<feature type="domain" description="Obg" evidence="2">
    <location>
        <begin position="1"/>
        <end position="159"/>
    </location>
</feature>
<feature type="domain" description="OBG-type G" evidence="1">
    <location>
        <begin position="160"/>
        <end position="333"/>
    </location>
</feature>
<feature type="binding site" evidence="1">
    <location>
        <begin position="166"/>
        <end position="173"/>
    </location>
    <ligand>
        <name>GTP</name>
        <dbReference type="ChEBI" id="CHEBI:37565"/>
    </ligand>
</feature>
<feature type="binding site" evidence="1">
    <location>
        <position position="173"/>
    </location>
    <ligand>
        <name>Mg(2+)</name>
        <dbReference type="ChEBI" id="CHEBI:18420"/>
    </ligand>
</feature>
<feature type="binding site" evidence="1">
    <location>
        <begin position="191"/>
        <end position="195"/>
    </location>
    <ligand>
        <name>GTP</name>
        <dbReference type="ChEBI" id="CHEBI:37565"/>
    </ligand>
</feature>
<feature type="binding site" evidence="1">
    <location>
        <position position="193"/>
    </location>
    <ligand>
        <name>Mg(2+)</name>
        <dbReference type="ChEBI" id="CHEBI:18420"/>
    </ligand>
</feature>
<feature type="binding site" evidence="1">
    <location>
        <begin position="213"/>
        <end position="216"/>
    </location>
    <ligand>
        <name>GTP</name>
        <dbReference type="ChEBI" id="CHEBI:37565"/>
    </ligand>
</feature>
<feature type="binding site" evidence="1">
    <location>
        <begin position="283"/>
        <end position="286"/>
    </location>
    <ligand>
        <name>GTP</name>
        <dbReference type="ChEBI" id="CHEBI:37565"/>
    </ligand>
</feature>
<feature type="binding site" evidence="1">
    <location>
        <begin position="314"/>
        <end position="316"/>
    </location>
    <ligand>
        <name>GTP</name>
        <dbReference type="ChEBI" id="CHEBI:37565"/>
    </ligand>
</feature>
<accession>Q0HLU0</accession>
<sequence>MKFVDEAVIRVEAGDGGSGCVSFRREKYIPDGGPDGGDGGDGGSVYLQADENHNTLIEYRFERFHMAERGENGRGRDCTGHSGKDLILKVPVGTRAIDDETEEVLGDLTTHGQKLLVAKGGFHGLGNTRFKSSTNRAPRQKTLGTPGEVRSLKLELLLLADVGLLGMPNAGKSTFIRAVSRATPKVADYPFTTLVPNLGVVNPRPGQSFVIADIPGLIEGAAEGAGLGIRFLKHLERCRILLHIIDIEPIDGTDPVDSARAIVGELEKYSPKLASKPRWLVFNKADLLLEDELKEKVARVVKELGWEGDVYTISAYSRDGTKELATKLLDFIQSLPPEDKDANPDAEVEFKWDNYHQANIDAINEDYDDEFDDDFDDDDYDVEVIYQR</sequence>
<keyword id="KW-0963">Cytoplasm</keyword>
<keyword id="KW-0342">GTP-binding</keyword>
<keyword id="KW-0378">Hydrolase</keyword>
<keyword id="KW-0460">Magnesium</keyword>
<keyword id="KW-0479">Metal-binding</keyword>
<keyword id="KW-0547">Nucleotide-binding</keyword>